<proteinExistence type="evidence at transcript level"/>
<organism>
    <name type="scientific">Macaca fascicularis</name>
    <name type="common">Crab-eating macaque</name>
    <name type="synonym">Cynomolgus monkey</name>
    <dbReference type="NCBI Taxonomy" id="9541"/>
    <lineage>
        <taxon>Eukaryota</taxon>
        <taxon>Metazoa</taxon>
        <taxon>Chordata</taxon>
        <taxon>Craniata</taxon>
        <taxon>Vertebrata</taxon>
        <taxon>Euteleostomi</taxon>
        <taxon>Mammalia</taxon>
        <taxon>Eutheria</taxon>
        <taxon>Euarchontoglires</taxon>
        <taxon>Primates</taxon>
        <taxon>Haplorrhini</taxon>
        <taxon>Catarrhini</taxon>
        <taxon>Cercopithecidae</taxon>
        <taxon>Cercopithecinae</taxon>
        <taxon>Macaca</taxon>
    </lineage>
</organism>
<gene>
    <name type="primary">ISCA1</name>
    <name type="synonym">HBLD2</name>
    <name type="ORF">QnpA-15294</name>
</gene>
<feature type="transit peptide" description="Mitochondrion" evidence="3">
    <location>
        <begin position="1"/>
        <end position="12"/>
    </location>
</feature>
<feature type="chain" id="PRO_0000042735" description="Iron-sulfur cluster assembly 1 homolog, mitochondrial">
    <location>
        <begin position="13"/>
        <end position="129"/>
    </location>
</feature>
<feature type="binding site" evidence="1">
    <location>
        <position position="57"/>
    </location>
    <ligand>
        <name>Fe cation</name>
        <dbReference type="ChEBI" id="CHEBI:24875"/>
    </ligand>
</feature>
<feature type="binding site" evidence="1">
    <location>
        <position position="121"/>
    </location>
    <ligand>
        <name>Fe cation</name>
        <dbReference type="ChEBI" id="CHEBI:24875"/>
    </ligand>
</feature>
<feature type="binding site" evidence="1">
    <location>
        <position position="123"/>
    </location>
    <ligand>
        <name>Fe cation</name>
        <dbReference type="ChEBI" id="CHEBI:24875"/>
    </ligand>
</feature>
<name>ISCA1_MACFA</name>
<protein>
    <recommendedName>
        <fullName>Iron-sulfur cluster assembly 1 homolog, mitochondrial</fullName>
    </recommendedName>
    <alternativeName>
        <fullName>HESB-like domain-containing protein 2</fullName>
    </alternativeName>
    <alternativeName>
        <fullName>Iron-sulfur assembly protein IscA</fullName>
    </alternativeName>
</protein>
<accession>Q4R5F0</accession>
<evidence type="ECO:0000250" key="1">
    <source>
        <dbReference type="UniProtKB" id="P0AAC8"/>
    </source>
</evidence>
<evidence type="ECO:0000250" key="2">
    <source>
        <dbReference type="UniProtKB" id="Q9BUE6"/>
    </source>
</evidence>
<evidence type="ECO:0000255" key="3"/>
<evidence type="ECO:0000305" key="4"/>
<sequence>MSASLVRATVRAVSKRKLQPTRAALTLTPSAVNKIKQLLKDKPEHVGVKVGVRTRGCNGLSYTLEYTKTKGDSDEEVIQDGVRVFIEKKAQLTLLGTEMDYVEDKLSSEFVFNNPNIKGTCGCGESFNI</sequence>
<keyword id="KW-0408">Iron</keyword>
<keyword id="KW-0411">Iron-sulfur</keyword>
<keyword id="KW-0479">Metal-binding</keyword>
<keyword id="KW-0496">Mitochondrion</keyword>
<keyword id="KW-1185">Reference proteome</keyword>
<keyword id="KW-0809">Transit peptide</keyword>
<reference key="1">
    <citation type="submission" date="2005-06" db="EMBL/GenBank/DDBJ databases">
        <title>DNA sequences of macaque genes expressed in brain or testis and its evolutionary implications.</title>
        <authorList>
            <consortium name="International consortium for macaque cDNA sequencing and analysis"/>
        </authorList>
    </citation>
    <scope>NUCLEOTIDE SEQUENCE [LARGE SCALE MRNA]</scope>
    <source>
        <tissue>Parietal cortex</tissue>
    </source>
</reference>
<comment type="function">
    <text evidence="2">Involved in the maturation of mitochondrial 4Fe-4S proteins functioning late in the iron-sulfur cluster assembly pathway. Probably involved in the binding of an intermediate of Fe/S cluster assembly.</text>
</comment>
<comment type="subunit">
    <text evidence="2">Interacts with CRY2, but not with CRY1 (in vitro).</text>
</comment>
<comment type="subcellular location">
    <subcellularLocation>
        <location evidence="2">Mitochondrion</location>
    </subcellularLocation>
</comment>
<comment type="similarity">
    <text evidence="4">Belongs to the HesB/IscA family.</text>
</comment>
<dbReference type="EMBL" id="AB169593">
    <property type="protein sequence ID" value="BAE01675.1"/>
    <property type="molecule type" value="mRNA"/>
</dbReference>
<dbReference type="RefSeq" id="XP_005582127.3">
    <property type="nucleotide sequence ID" value="XM_005582070.4"/>
</dbReference>
<dbReference type="SMR" id="Q4R5F0"/>
<dbReference type="STRING" id="9541.ENSMFAP00000002056"/>
<dbReference type="Ensembl" id="ENSMFAT00000027198.2">
    <property type="protein sequence ID" value="ENSMFAP00000002056.2"/>
    <property type="gene ID" value="ENSMFAG00000038304.2"/>
</dbReference>
<dbReference type="GeneID" id="101867050"/>
<dbReference type="KEGG" id="mcf:101867050"/>
<dbReference type="CTD" id="81689"/>
<dbReference type="VEuPathDB" id="HostDB:ENSMFAG00000038304"/>
<dbReference type="eggNOG" id="KOG1120">
    <property type="taxonomic scope" value="Eukaryota"/>
</dbReference>
<dbReference type="GeneTree" id="ENSGT00490000043385"/>
<dbReference type="OMA" id="LYIYGMQ"/>
<dbReference type="Proteomes" id="UP000233100">
    <property type="component" value="Chromosome 15"/>
</dbReference>
<dbReference type="Bgee" id="ENSMFAG00000038304">
    <property type="expression patterns" value="Expressed in bone marrow and 13 other cell types or tissues"/>
</dbReference>
<dbReference type="GO" id="GO:0005739">
    <property type="term" value="C:mitochondrion"/>
    <property type="evidence" value="ECO:0007669"/>
    <property type="project" value="UniProtKB-SubCell"/>
</dbReference>
<dbReference type="GO" id="GO:0051537">
    <property type="term" value="F:2 iron, 2 sulfur cluster binding"/>
    <property type="evidence" value="ECO:0007669"/>
    <property type="project" value="TreeGrafter"/>
</dbReference>
<dbReference type="GO" id="GO:0046872">
    <property type="term" value="F:metal ion binding"/>
    <property type="evidence" value="ECO:0007669"/>
    <property type="project" value="UniProtKB-KW"/>
</dbReference>
<dbReference type="GO" id="GO:0016226">
    <property type="term" value="P:iron-sulfur cluster assembly"/>
    <property type="evidence" value="ECO:0007669"/>
    <property type="project" value="InterPro"/>
</dbReference>
<dbReference type="FunFam" id="2.60.300.12:FF:000001">
    <property type="entry name" value="Iron-binding protein IscA"/>
    <property type="match status" value="1"/>
</dbReference>
<dbReference type="Gene3D" id="2.60.300.12">
    <property type="entry name" value="HesB-like domain"/>
    <property type="match status" value="1"/>
</dbReference>
<dbReference type="InterPro" id="IPR050322">
    <property type="entry name" value="Fe-S_cluster_asmbl/transfer"/>
</dbReference>
<dbReference type="InterPro" id="IPR000361">
    <property type="entry name" value="FeS_biogenesis"/>
</dbReference>
<dbReference type="InterPro" id="IPR016092">
    <property type="entry name" value="FeS_cluster_insertion"/>
</dbReference>
<dbReference type="InterPro" id="IPR017870">
    <property type="entry name" value="FeS_cluster_insertion_CS"/>
</dbReference>
<dbReference type="InterPro" id="IPR035903">
    <property type="entry name" value="HesB-like_dom_sf"/>
</dbReference>
<dbReference type="NCBIfam" id="TIGR00049">
    <property type="entry name" value="iron-sulfur cluster assembly accessory protein"/>
    <property type="match status" value="1"/>
</dbReference>
<dbReference type="PANTHER" id="PTHR10072:SF41">
    <property type="entry name" value="IRON-SULFUR CLUSTER ASSEMBLY 1 HOMOLOG, MITOCHONDRIAL"/>
    <property type="match status" value="1"/>
</dbReference>
<dbReference type="PANTHER" id="PTHR10072">
    <property type="entry name" value="IRON-SULFUR CLUSTER ASSEMBLY PROTEIN"/>
    <property type="match status" value="1"/>
</dbReference>
<dbReference type="Pfam" id="PF01521">
    <property type="entry name" value="Fe-S_biosyn"/>
    <property type="match status" value="1"/>
</dbReference>
<dbReference type="SUPFAM" id="SSF89360">
    <property type="entry name" value="HesB-like domain"/>
    <property type="match status" value="1"/>
</dbReference>
<dbReference type="PROSITE" id="PS01152">
    <property type="entry name" value="HESB"/>
    <property type="match status" value="1"/>
</dbReference>